<protein>
    <recommendedName>
        <fullName evidence="1">Hemagglutinin-esterase</fullName>
        <shortName evidence="1">HE protein</shortName>
        <ecNumber evidence="1">3.1.1.53</ecNumber>
    </recommendedName>
    <alternativeName>
        <fullName evidence="1">E3 glycoprotein</fullName>
    </alternativeName>
</protein>
<sequence>MFLLPRFILVSCIIGSLGFDNPPTNVVSHLNGDWFLFGDSRSDCNHVVNTNPRNYSYMDLNPALCDSGKISSKAGNSIFRSFHFTDFYNYTGEGQQIIFYEGVNFTPYHAFKCTTSGSNDIWMQNKGLFYTQVYKNMAVYRSLTFVNVPYVYNGSAQSTALCKSGSLVLNNPAYIAREANFGDYYYKVEADFYLSGCDEYIVPLCIFNGKFLSNTKYYDDSQYYFNKDTGVIYGLNSTETITTGFDFNCHYLVLPSGNYLAISNELLLTVPTKAICLNKRKDFTPVQVVHSRWNNARQSDNMTAVACQPPYCYFRNSTTNYVGVYDINHGDAGFTSILSGLLYDSPCFSQQGVFRYNNVSSVWPLYPYGRCPTAADINTPDVPICVYDPLPLILLGILLGVAVIIIVVLLLYFMVENGTRL</sequence>
<evidence type="ECO:0000255" key="1">
    <source>
        <dbReference type="HAMAP-Rule" id="MF_04207"/>
    </source>
</evidence>
<comment type="function">
    <text evidence="1">Structural protein that makes short spikes at the surface of the virus. Contains receptor binding and receptor-destroying activities. Mediates de-O-acetylation of N-acetyl-4-O-acetylneuraminic acid, which is probably the receptor determinant recognized by the virus on the surface of erythrocytes and susceptible cells. This receptor-destroying activity is important for virus release as it probably helps preventing self-aggregation and ensures the efficient spread of the progeny virus from cell to cell. May serve as a secondary viral attachment protein for initiating infection, the spike protein being the major one. May become a target for both the humoral and the cellular branches of the immune system.</text>
</comment>
<comment type="catalytic activity">
    <reaction evidence="1">
        <text>N-acetyl-9-O-acetylneuraminate + H2O = N-acetylneuraminate + acetate + H(+)</text>
        <dbReference type="Rhea" id="RHEA:22600"/>
        <dbReference type="ChEBI" id="CHEBI:15377"/>
        <dbReference type="ChEBI" id="CHEBI:15378"/>
        <dbReference type="ChEBI" id="CHEBI:28999"/>
        <dbReference type="ChEBI" id="CHEBI:30089"/>
        <dbReference type="ChEBI" id="CHEBI:35418"/>
        <dbReference type="EC" id="3.1.1.53"/>
    </reaction>
</comment>
<comment type="catalytic activity">
    <reaction evidence="1">
        <text>N-acetyl-4-O-acetylneuraminate + H2O = N-acetylneuraminate + acetate + H(+)</text>
        <dbReference type="Rhea" id="RHEA:25564"/>
        <dbReference type="ChEBI" id="CHEBI:15377"/>
        <dbReference type="ChEBI" id="CHEBI:15378"/>
        <dbReference type="ChEBI" id="CHEBI:29006"/>
        <dbReference type="ChEBI" id="CHEBI:30089"/>
        <dbReference type="ChEBI" id="CHEBI:35418"/>
        <dbReference type="EC" id="3.1.1.53"/>
    </reaction>
</comment>
<comment type="subunit">
    <text evidence="1">Homodimer; disulfide-linked. Forms a complex with the M protein in the pre-Golgi. Associates then with S-M complex to form a ternary complex S-M-HE.</text>
</comment>
<comment type="subcellular location">
    <subcellularLocation>
        <location evidence="1">Virion membrane</location>
        <topology evidence="1">Single-pass type I membrane protein</topology>
    </subcellularLocation>
    <subcellularLocation>
        <location evidence="1">Host cell membrane</location>
        <topology evidence="1">Single-pass type I membrane protein</topology>
    </subcellularLocation>
    <text evidence="1">In infected cells becomes incorporated into the envelope of virions during virus assembly at the endoplasmic reticulum and cis Golgi. However, some may escape incorporation into virions and subsequently migrate to the cell surface.</text>
</comment>
<comment type="PTM">
    <text evidence="1">N-glycosylated in the host RER.</text>
</comment>
<comment type="similarity">
    <text evidence="1">Belongs to the influenza type C/coronaviruses hemagglutinin-esterase family.</text>
</comment>
<organismHost>
    <name type="scientific">Bos taurus</name>
    <name type="common">Bovine</name>
    <dbReference type="NCBI Taxonomy" id="9913"/>
</organismHost>
<proteinExistence type="inferred from homology"/>
<accession>P33468</accession>
<feature type="signal peptide" evidence="1">
    <location>
        <begin position="1"/>
        <end position="16"/>
    </location>
</feature>
<feature type="chain" id="PRO_0000037134" description="Hemagglutinin-esterase" evidence="1">
    <location>
        <begin position="17"/>
        <end position="421"/>
    </location>
</feature>
<feature type="topological domain" description="Virion surface" evidence="1">
    <location>
        <begin position="17"/>
        <end position="392"/>
    </location>
</feature>
<feature type="transmembrane region" description="Helical" evidence="1">
    <location>
        <begin position="393"/>
        <end position="413"/>
    </location>
</feature>
<feature type="topological domain" description="Intravirion" evidence="1">
    <location>
        <begin position="414"/>
        <end position="421"/>
    </location>
</feature>
<feature type="region of interest" description="Esterase domain 1" evidence="1">
    <location>
        <begin position="7"/>
        <end position="127"/>
    </location>
</feature>
<feature type="region of interest" description="Receptor binding" evidence="1">
    <location>
        <begin position="128"/>
        <end position="266"/>
    </location>
</feature>
<feature type="region of interest" description="Esterase domain 2" evidence="1">
    <location>
        <begin position="267"/>
        <end position="379"/>
    </location>
</feature>
<feature type="active site" description="Nucleophile" evidence="1">
    <location>
        <position position="40"/>
    </location>
</feature>
<feature type="active site" description="Charge relay system" evidence="1">
    <location>
        <position position="326"/>
    </location>
</feature>
<feature type="active site" description="Charge relay system" evidence="1">
    <location>
        <position position="329"/>
    </location>
</feature>
<feature type="glycosylation site" description="N-linked (GlcNAc...) asparagine; by host" evidence="1">
    <location>
        <position position="54"/>
    </location>
</feature>
<feature type="glycosylation site" description="N-linked (GlcNAc...) asparagine; by host" evidence="1">
    <location>
        <position position="89"/>
    </location>
</feature>
<feature type="glycosylation site" description="N-linked (GlcNAc...) asparagine; by host" evidence="1">
    <location>
        <position position="153"/>
    </location>
</feature>
<feature type="glycosylation site" description="N-linked (GlcNAc...) asparagine; by host" evidence="1">
    <location>
        <position position="236"/>
    </location>
</feature>
<feature type="glycosylation site" description="N-linked (GlcNAc...) asparagine; by host" evidence="1">
    <location>
        <position position="301"/>
    </location>
</feature>
<feature type="glycosylation site" description="N-linked (GlcNAc...) asparagine; by host" evidence="1">
    <location>
        <position position="316"/>
    </location>
</feature>
<feature type="glycosylation site" description="N-linked (GlcNAc...) asparagine; by host" evidence="1">
    <location>
        <position position="358"/>
    </location>
</feature>
<feature type="glycosylation site" description="N-linked (GlcNAc...) asparagine; by host" evidence="1">
    <location>
        <position position="417"/>
    </location>
</feature>
<feature type="disulfide bond" evidence="1">
    <location>
        <begin position="44"/>
        <end position="65"/>
    </location>
</feature>
<feature type="disulfide bond" evidence="1">
    <location>
        <begin position="113"/>
        <end position="162"/>
    </location>
</feature>
<feature type="disulfide bond" evidence="1">
    <location>
        <begin position="197"/>
        <end position="276"/>
    </location>
</feature>
<feature type="disulfide bond" evidence="1">
    <location>
        <begin position="205"/>
        <end position="249"/>
    </location>
</feature>
<feature type="disulfide bond" evidence="1">
    <location>
        <begin position="307"/>
        <end position="312"/>
    </location>
</feature>
<feature type="disulfide bond" evidence="1">
    <location>
        <begin position="347"/>
        <end position="371"/>
    </location>
</feature>
<reference key="1">
    <citation type="journal article" date="1990" name="Adv. Exp. Med. Biol.">
        <title>Sequence analysis of the 3' end (8740 nucleotides) of BECV genome; comparison with homologous MHV nucleotide sequence.</title>
        <authorList>
            <person name="Boireau P."/>
            <person name="Woloszyn N."/>
            <person name="Cruciere C."/>
            <person name="Savoysky E."/>
            <person name="Laporte J."/>
        </authorList>
    </citation>
    <scope>NUCLEOTIDE SEQUENCE</scope>
</reference>
<dbReference type="EC" id="3.1.1.53" evidence="1"/>
<dbReference type="PIR" id="A43566">
    <property type="entry name" value="A43566"/>
</dbReference>
<dbReference type="SMR" id="P33468"/>
<dbReference type="GlyCosmos" id="P33468">
    <property type="glycosylation" value="8 sites, No reported glycans"/>
</dbReference>
<dbReference type="GO" id="GO:0020002">
    <property type="term" value="C:host cell plasma membrane"/>
    <property type="evidence" value="ECO:0007669"/>
    <property type="project" value="UniProtKB-SubCell"/>
</dbReference>
<dbReference type="GO" id="GO:0016020">
    <property type="term" value="C:membrane"/>
    <property type="evidence" value="ECO:0007669"/>
    <property type="project" value="UniProtKB-UniRule"/>
</dbReference>
<dbReference type="GO" id="GO:0019031">
    <property type="term" value="C:viral envelope"/>
    <property type="evidence" value="ECO:0007669"/>
    <property type="project" value="UniProtKB-UniRule"/>
</dbReference>
<dbReference type="GO" id="GO:0055036">
    <property type="term" value="C:virion membrane"/>
    <property type="evidence" value="ECO:0007669"/>
    <property type="project" value="UniProtKB-SubCell"/>
</dbReference>
<dbReference type="GO" id="GO:0046789">
    <property type="term" value="F:host cell surface receptor binding"/>
    <property type="evidence" value="ECO:0007669"/>
    <property type="project" value="UniProtKB-UniRule"/>
</dbReference>
<dbReference type="GO" id="GO:0106331">
    <property type="term" value="F:sialate 4-O-acetylesterase activity"/>
    <property type="evidence" value="ECO:0007669"/>
    <property type="project" value="RHEA"/>
</dbReference>
<dbReference type="GO" id="GO:0106330">
    <property type="term" value="F:sialate 9-O-acetylesterase activity"/>
    <property type="evidence" value="ECO:0007669"/>
    <property type="project" value="RHEA"/>
</dbReference>
<dbReference type="GO" id="GO:0001681">
    <property type="term" value="F:sialate O-acetylesterase activity"/>
    <property type="evidence" value="ECO:0000250"/>
    <property type="project" value="UniProtKB"/>
</dbReference>
<dbReference type="GO" id="GO:0019064">
    <property type="term" value="P:fusion of virus membrane with host plasma membrane"/>
    <property type="evidence" value="ECO:0007669"/>
    <property type="project" value="UniProtKB-UniRule"/>
</dbReference>
<dbReference type="HAMAP" id="MF_04207">
    <property type="entry name" value="BETA_CORONA_HE"/>
    <property type="match status" value="1"/>
</dbReference>
<dbReference type="InterPro" id="IPR008980">
    <property type="entry name" value="Capsid_hemagglutn"/>
</dbReference>
<dbReference type="InterPro" id="IPR042545">
    <property type="entry name" value="HEMA"/>
</dbReference>
<dbReference type="InterPro" id="IPR007142">
    <property type="entry name" value="Hemagglutn-estrase_core"/>
</dbReference>
<dbReference type="InterPro" id="IPR003860">
    <property type="entry name" value="Hemagglutn-estrase_hemagglutn"/>
</dbReference>
<dbReference type="Pfam" id="PF03996">
    <property type="entry name" value="Hema_esterase"/>
    <property type="match status" value="1"/>
</dbReference>
<dbReference type="Pfam" id="PF02710">
    <property type="entry name" value="Hema_HEFG"/>
    <property type="match status" value="1"/>
</dbReference>
<dbReference type="SUPFAM" id="SSF52266">
    <property type="entry name" value="SGNH hydrolase"/>
    <property type="match status" value="1"/>
</dbReference>
<dbReference type="SUPFAM" id="SSF49818">
    <property type="entry name" value="Viral protein domain"/>
    <property type="match status" value="1"/>
</dbReference>
<name>HEMA_CVBF</name>
<gene>
    <name evidence="1" type="primary">HE</name>
    <name type="ORF">2b</name>
</gene>
<keyword id="KW-1015">Disulfide bond</keyword>
<keyword id="KW-0325">Glycoprotein</keyword>
<keyword id="KW-0348">Hemagglutinin</keyword>
<keyword id="KW-1032">Host cell membrane</keyword>
<keyword id="KW-1043">Host membrane</keyword>
<keyword id="KW-0378">Hydrolase</keyword>
<keyword id="KW-0472">Membrane</keyword>
<keyword id="KW-0732">Signal</keyword>
<keyword id="KW-0812">Transmembrane</keyword>
<keyword id="KW-1133">Transmembrane helix</keyword>
<keyword id="KW-0261">Viral envelope protein</keyword>
<keyword id="KW-0946">Virion</keyword>
<organism>
    <name type="scientific">Bovine coronavirus (strain F15)</name>
    <name type="common">BCoV</name>
    <name type="synonym">BCV</name>
    <dbReference type="NCBI Taxonomy" id="11129"/>
    <lineage>
        <taxon>Viruses</taxon>
        <taxon>Riboviria</taxon>
        <taxon>Orthornavirae</taxon>
        <taxon>Pisuviricota</taxon>
        <taxon>Pisoniviricetes</taxon>
        <taxon>Nidovirales</taxon>
        <taxon>Cornidovirineae</taxon>
        <taxon>Coronaviridae</taxon>
        <taxon>Orthocoronavirinae</taxon>
        <taxon>Betacoronavirus</taxon>
        <taxon>Embecovirus</taxon>
        <taxon>Betacoronavirus 1</taxon>
    </lineage>
</organism>